<sequence length="479" mass="54043">MDYHSPYFFGYLLGLIHLLGIVAALHAVFTVRTAQGAIAWAMPLFFIPYLTLIPYLVFGARSFYAYIKARRQANHEMHVAMANLNWRPWVEEALTARESESYAALRAMPKLSRMPCLANNQVKLLINGQATFDAIFAAIEKARDVVLVQFFIIHDDTLGKALQQLLLRKAAEGVQVFVLYDRVGSHALPASYSQVLRDGGVQIHAFATRRGWFNRFQVNFRNHRKIVVVDGLVGFIGGHNVGDEYLGKHPQLSPWRDTHVQISGPVLACLQESFAEDWYWATRQLPPLILPDAYPDNGVLCQALASGPADPQETCSLFFLEAIHSATRRVWITSPYFIPDEAVFAALRLAVLRGVDVRVLIPSRPDHRIVYAASSLFAFEAVRAGVRVFRYQPGFLHQKVVLVDDDVSAIGSANLDNRSFRLNFEITLLTVDRSFADQVEHMLNDDFEQAREITAEDSRDTHRLQQLGMRIARLISPIL</sequence>
<proteinExistence type="inferred from homology"/>
<organism>
    <name type="scientific">Pseudomonas putida (strain GB-1)</name>
    <dbReference type="NCBI Taxonomy" id="76869"/>
    <lineage>
        <taxon>Bacteria</taxon>
        <taxon>Pseudomonadati</taxon>
        <taxon>Pseudomonadota</taxon>
        <taxon>Gammaproteobacteria</taxon>
        <taxon>Pseudomonadales</taxon>
        <taxon>Pseudomonadaceae</taxon>
        <taxon>Pseudomonas</taxon>
    </lineage>
</organism>
<accession>B0KR91</accession>
<dbReference type="EC" id="2.7.8.-" evidence="1"/>
<dbReference type="EMBL" id="CP000926">
    <property type="protein sequence ID" value="ABZ01296.1"/>
    <property type="molecule type" value="Genomic_DNA"/>
</dbReference>
<dbReference type="RefSeq" id="WP_012274893.1">
    <property type="nucleotide sequence ID" value="NC_010322.1"/>
</dbReference>
<dbReference type="SMR" id="B0KR91"/>
<dbReference type="KEGG" id="ppg:PputGB1_5414"/>
<dbReference type="eggNOG" id="COG1502">
    <property type="taxonomic scope" value="Bacteria"/>
</dbReference>
<dbReference type="HOGENOM" id="CLU_038053_1_0_6"/>
<dbReference type="Proteomes" id="UP000002157">
    <property type="component" value="Chromosome"/>
</dbReference>
<dbReference type="GO" id="GO:0005886">
    <property type="term" value="C:plasma membrane"/>
    <property type="evidence" value="ECO:0007669"/>
    <property type="project" value="UniProtKB-SubCell"/>
</dbReference>
<dbReference type="GO" id="GO:0008808">
    <property type="term" value="F:cardiolipin synthase activity"/>
    <property type="evidence" value="ECO:0007669"/>
    <property type="project" value="InterPro"/>
</dbReference>
<dbReference type="GO" id="GO:0032049">
    <property type="term" value="P:cardiolipin biosynthetic process"/>
    <property type="evidence" value="ECO:0007669"/>
    <property type="project" value="InterPro"/>
</dbReference>
<dbReference type="CDD" id="cd09155">
    <property type="entry name" value="PLDc_PaCLS_like_1"/>
    <property type="match status" value="1"/>
</dbReference>
<dbReference type="CDD" id="cd09161">
    <property type="entry name" value="PLDc_PaCLS_like_2"/>
    <property type="match status" value="1"/>
</dbReference>
<dbReference type="FunFam" id="3.30.870.10:FF:000014">
    <property type="entry name" value="Cardiolipin synthase"/>
    <property type="match status" value="1"/>
</dbReference>
<dbReference type="FunFam" id="3.30.870.10:FF:000021">
    <property type="entry name" value="Cardiolipin synthase"/>
    <property type="match status" value="1"/>
</dbReference>
<dbReference type="Gene3D" id="3.30.870.10">
    <property type="entry name" value="Endonuclease Chain A"/>
    <property type="match status" value="2"/>
</dbReference>
<dbReference type="HAMAP" id="MF_00190">
    <property type="entry name" value="Cardiolipin_synth_ClsA"/>
    <property type="match status" value="1"/>
</dbReference>
<dbReference type="InterPro" id="IPR022924">
    <property type="entry name" value="Cardiolipin_synthase"/>
</dbReference>
<dbReference type="InterPro" id="IPR030840">
    <property type="entry name" value="CL_synthase_A"/>
</dbReference>
<dbReference type="InterPro" id="IPR025202">
    <property type="entry name" value="PLD-like_dom"/>
</dbReference>
<dbReference type="InterPro" id="IPR001736">
    <property type="entry name" value="PLipase_D/transphosphatidylase"/>
</dbReference>
<dbReference type="NCBIfam" id="TIGR04265">
    <property type="entry name" value="bac_cardiolipin"/>
    <property type="match status" value="1"/>
</dbReference>
<dbReference type="PANTHER" id="PTHR21248">
    <property type="entry name" value="CARDIOLIPIN SYNTHASE"/>
    <property type="match status" value="1"/>
</dbReference>
<dbReference type="PANTHER" id="PTHR21248:SF22">
    <property type="entry name" value="PHOSPHOLIPASE D"/>
    <property type="match status" value="1"/>
</dbReference>
<dbReference type="Pfam" id="PF13091">
    <property type="entry name" value="PLDc_2"/>
    <property type="match status" value="2"/>
</dbReference>
<dbReference type="SMART" id="SM00155">
    <property type="entry name" value="PLDc"/>
    <property type="match status" value="2"/>
</dbReference>
<dbReference type="SUPFAM" id="SSF56024">
    <property type="entry name" value="Phospholipase D/nuclease"/>
    <property type="match status" value="2"/>
</dbReference>
<dbReference type="PROSITE" id="PS50035">
    <property type="entry name" value="PLD"/>
    <property type="match status" value="2"/>
</dbReference>
<evidence type="ECO:0000255" key="1">
    <source>
        <dbReference type="HAMAP-Rule" id="MF_00190"/>
    </source>
</evidence>
<protein>
    <recommendedName>
        <fullName evidence="1">Cardiolipin synthase A</fullName>
        <shortName evidence="1">CL synthase</shortName>
        <ecNumber evidence="1">2.7.8.-</ecNumber>
    </recommendedName>
</protein>
<feature type="chain" id="PRO_1000077503" description="Cardiolipin synthase A">
    <location>
        <begin position="1"/>
        <end position="479"/>
    </location>
</feature>
<feature type="transmembrane region" description="Helical" evidence="1">
    <location>
        <begin position="8"/>
        <end position="28"/>
    </location>
</feature>
<feature type="transmembrane region" description="Helical" evidence="1">
    <location>
        <begin position="38"/>
        <end position="58"/>
    </location>
</feature>
<feature type="domain" description="PLD phosphodiesterase 1" evidence="1">
    <location>
        <begin position="218"/>
        <end position="245"/>
    </location>
</feature>
<feature type="domain" description="PLD phosphodiesterase 2" evidence="1">
    <location>
        <begin position="392"/>
        <end position="419"/>
    </location>
</feature>
<feature type="active site" evidence="1">
    <location>
        <position position="223"/>
    </location>
</feature>
<feature type="active site" evidence="1">
    <location>
        <position position="225"/>
    </location>
</feature>
<feature type="active site" evidence="1">
    <location>
        <position position="230"/>
    </location>
</feature>
<feature type="active site" evidence="1">
    <location>
        <position position="397"/>
    </location>
</feature>
<feature type="active site" evidence="1">
    <location>
        <position position="399"/>
    </location>
</feature>
<feature type="active site" evidence="1">
    <location>
        <position position="404"/>
    </location>
</feature>
<keyword id="KW-0997">Cell inner membrane</keyword>
<keyword id="KW-1003">Cell membrane</keyword>
<keyword id="KW-0444">Lipid biosynthesis</keyword>
<keyword id="KW-0443">Lipid metabolism</keyword>
<keyword id="KW-0472">Membrane</keyword>
<keyword id="KW-0594">Phospholipid biosynthesis</keyword>
<keyword id="KW-1208">Phospholipid metabolism</keyword>
<keyword id="KW-0677">Repeat</keyword>
<keyword id="KW-0808">Transferase</keyword>
<keyword id="KW-0812">Transmembrane</keyword>
<keyword id="KW-1133">Transmembrane helix</keyword>
<comment type="function">
    <text evidence="1">Catalyzes the reversible phosphatidyl group transfer from one phosphatidylglycerol molecule to another to form cardiolipin (CL) (diphosphatidylglycerol) and glycerol.</text>
</comment>
<comment type="catalytic activity">
    <reaction evidence="1">
        <text>2 a 1,2-diacyl-sn-glycero-3-phospho-(1'-sn-glycerol) = a cardiolipin + glycerol</text>
        <dbReference type="Rhea" id="RHEA:31451"/>
        <dbReference type="ChEBI" id="CHEBI:17754"/>
        <dbReference type="ChEBI" id="CHEBI:62237"/>
        <dbReference type="ChEBI" id="CHEBI:64716"/>
    </reaction>
</comment>
<comment type="subcellular location">
    <subcellularLocation>
        <location evidence="1">Cell inner membrane</location>
        <topology evidence="1">Multi-pass membrane protein</topology>
    </subcellularLocation>
</comment>
<comment type="similarity">
    <text evidence="1">Belongs to the phospholipase D family. Cardiolipin synthase subfamily. ClsA sub-subfamily.</text>
</comment>
<reference key="1">
    <citation type="submission" date="2008-01" db="EMBL/GenBank/DDBJ databases">
        <title>Complete sequence of Pseudomonas putida GB-1.</title>
        <authorList>
            <consortium name="US DOE Joint Genome Institute"/>
            <person name="Copeland A."/>
            <person name="Lucas S."/>
            <person name="Lapidus A."/>
            <person name="Barry K."/>
            <person name="Glavina del Rio T."/>
            <person name="Dalin E."/>
            <person name="Tice H."/>
            <person name="Pitluck S."/>
            <person name="Bruce D."/>
            <person name="Goodwin L."/>
            <person name="Chertkov O."/>
            <person name="Brettin T."/>
            <person name="Detter J.C."/>
            <person name="Han C."/>
            <person name="Kuske C.R."/>
            <person name="Schmutz J."/>
            <person name="Larimer F."/>
            <person name="Land M."/>
            <person name="Hauser L."/>
            <person name="Kyrpides N."/>
            <person name="Kim E."/>
            <person name="McCarthy J.K."/>
            <person name="Richardson P."/>
        </authorList>
    </citation>
    <scope>NUCLEOTIDE SEQUENCE [LARGE SCALE GENOMIC DNA]</scope>
    <source>
        <strain>GB-1</strain>
    </source>
</reference>
<gene>
    <name evidence="1" type="primary">clsA</name>
    <name type="synonym">cls</name>
    <name type="ordered locus">PputGB1_5414</name>
</gene>
<name>CLSA_PSEPG</name>